<organism>
    <name type="scientific">Actinobacillus pleuropneumoniae serotype 3 (strain JL03)</name>
    <dbReference type="NCBI Taxonomy" id="434271"/>
    <lineage>
        <taxon>Bacteria</taxon>
        <taxon>Pseudomonadati</taxon>
        <taxon>Pseudomonadota</taxon>
        <taxon>Gammaproteobacteria</taxon>
        <taxon>Pasteurellales</taxon>
        <taxon>Pasteurellaceae</taxon>
        <taxon>Actinobacillus</taxon>
    </lineage>
</organism>
<protein>
    <recommendedName>
        <fullName evidence="1">Small ribosomal subunit protein uS15</fullName>
    </recommendedName>
    <alternativeName>
        <fullName evidence="2">30S ribosomal protein S15</fullName>
    </alternativeName>
</protein>
<proteinExistence type="inferred from homology"/>
<accession>B0BPU4</accession>
<name>RS15_ACTPJ</name>
<gene>
    <name evidence="1" type="primary">rpsO</name>
    <name type="ordered locus">APJL_1023</name>
</gene>
<dbReference type="EMBL" id="CP000687">
    <property type="protein sequence ID" value="ABY69579.1"/>
    <property type="molecule type" value="Genomic_DNA"/>
</dbReference>
<dbReference type="RefSeq" id="WP_005597777.1">
    <property type="nucleotide sequence ID" value="NC_010278.1"/>
</dbReference>
<dbReference type="SMR" id="B0BPU4"/>
<dbReference type="GeneID" id="67368470"/>
<dbReference type="KEGG" id="apj:APJL_1023"/>
<dbReference type="HOGENOM" id="CLU_148518_0_0_6"/>
<dbReference type="Proteomes" id="UP000008547">
    <property type="component" value="Chromosome"/>
</dbReference>
<dbReference type="GO" id="GO:0022627">
    <property type="term" value="C:cytosolic small ribosomal subunit"/>
    <property type="evidence" value="ECO:0007669"/>
    <property type="project" value="TreeGrafter"/>
</dbReference>
<dbReference type="GO" id="GO:0019843">
    <property type="term" value="F:rRNA binding"/>
    <property type="evidence" value="ECO:0007669"/>
    <property type="project" value="UniProtKB-UniRule"/>
</dbReference>
<dbReference type="GO" id="GO:0003735">
    <property type="term" value="F:structural constituent of ribosome"/>
    <property type="evidence" value="ECO:0007669"/>
    <property type="project" value="InterPro"/>
</dbReference>
<dbReference type="GO" id="GO:0006412">
    <property type="term" value="P:translation"/>
    <property type="evidence" value="ECO:0007669"/>
    <property type="project" value="UniProtKB-UniRule"/>
</dbReference>
<dbReference type="CDD" id="cd00353">
    <property type="entry name" value="Ribosomal_S15p_S13e"/>
    <property type="match status" value="1"/>
</dbReference>
<dbReference type="FunFam" id="1.10.287.10:FF:000002">
    <property type="entry name" value="30S ribosomal protein S15"/>
    <property type="match status" value="1"/>
</dbReference>
<dbReference type="Gene3D" id="6.10.250.3130">
    <property type="match status" value="1"/>
</dbReference>
<dbReference type="Gene3D" id="1.10.287.10">
    <property type="entry name" value="S15/NS1, RNA-binding"/>
    <property type="match status" value="1"/>
</dbReference>
<dbReference type="HAMAP" id="MF_01343_B">
    <property type="entry name" value="Ribosomal_uS15_B"/>
    <property type="match status" value="1"/>
</dbReference>
<dbReference type="InterPro" id="IPR000589">
    <property type="entry name" value="Ribosomal_uS15"/>
</dbReference>
<dbReference type="InterPro" id="IPR005290">
    <property type="entry name" value="Ribosomal_uS15_bac-type"/>
</dbReference>
<dbReference type="InterPro" id="IPR009068">
    <property type="entry name" value="uS15_NS1_RNA-bd_sf"/>
</dbReference>
<dbReference type="NCBIfam" id="TIGR00952">
    <property type="entry name" value="S15_bact"/>
    <property type="match status" value="1"/>
</dbReference>
<dbReference type="PANTHER" id="PTHR23321">
    <property type="entry name" value="RIBOSOMAL PROTEIN S15, BACTERIAL AND ORGANELLAR"/>
    <property type="match status" value="1"/>
</dbReference>
<dbReference type="PANTHER" id="PTHR23321:SF26">
    <property type="entry name" value="SMALL RIBOSOMAL SUBUNIT PROTEIN US15M"/>
    <property type="match status" value="1"/>
</dbReference>
<dbReference type="Pfam" id="PF00312">
    <property type="entry name" value="Ribosomal_S15"/>
    <property type="match status" value="1"/>
</dbReference>
<dbReference type="SMART" id="SM01387">
    <property type="entry name" value="Ribosomal_S15"/>
    <property type="match status" value="1"/>
</dbReference>
<dbReference type="SUPFAM" id="SSF47060">
    <property type="entry name" value="S15/NS1 RNA-binding domain"/>
    <property type="match status" value="1"/>
</dbReference>
<dbReference type="PROSITE" id="PS00362">
    <property type="entry name" value="RIBOSOMAL_S15"/>
    <property type="match status" value="1"/>
</dbReference>
<feature type="chain" id="PRO_1000143066" description="Small ribosomal subunit protein uS15">
    <location>
        <begin position="1"/>
        <end position="89"/>
    </location>
</feature>
<comment type="function">
    <text evidence="1">One of the primary rRNA binding proteins, it binds directly to 16S rRNA where it helps nucleate assembly of the platform of the 30S subunit by binding and bridging several RNA helices of the 16S rRNA.</text>
</comment>
<comment type="function">
    <text evidence="1">Forms an intersubunit bridge (bridge B4) with the 23S rRNA of the 50S subunit in the ribosome.</text>
</comment>
<comment type="subunit">
    <text evidence="1">Part of the 30S ribosomal subunit. Forms a bridge to the 50S subunit in the 70S ribosome, contacting the 23S rRNA.</text>
</comment>
<comment type="similarity">
    <text evidence="1">Belongs to the universal ribosomal protein uS15 family.</text>
</comment>
<evidence type="ECO:0000255" key="1">
    <source>
        <dbReference type="HAMAP-Rule" id="MF_01343"/>
    </source>
</evidence>
<evidence type="ECO:0000305" key="2"/>
<keyword id="KW-0687">Ribonucleoprotein</keyword>
<keyword id="KW-0689">Ribosomal protein</keyword>
<keyword id="KW-0694">RNA-binding</keyword>
<keyword id="KW-0699">rRNA-binding</keyword>
<reference key="1">
    <citation type="journal article" date="2008" name="PLoS ONE">
        <title>Genome biology of Actinobacillus pleuropneumoniae JL03, an isolate of serotype 3 prevalent in China.</title>
        <authorList>
            <person name="Xu Z."/>
            <person name="Zhou Y."/>
            <person name="Li L."/>
            <person name="Zhou R."/>
            <person name="Xiao S."/>
            <person name="Wan Y."/>
            <person name="Zhang S."/>
            <person name="Wang K."/>
            <person name="Li W."/>
            <person name="Li L."/>
            <person name="Jin H."/>
            <person name="Kang M."/>
            <person name="Dalai B."/>
            <person name="Li T."/>
            <person name="Liu L."/>
            <person name="Cheng Y."/>
            <person name="Zhang L."/>
            <person name="Xu T."/>
            <person name="Zheng H."/>
            <person name="Pu S."/>
            <person name="Wang B."/>
            <person name="Gu W."/>
            <person name="Zhang X.L."/>
            <person name="Zhu G.-F."/>
            <person name="Wang S."/>
            <person name="Zhao G.-P."/>
            <person name="Chen H."/>
        </authorList>
    </citation>
    <scope>NUCLEOTIDE SEQUENCE [LARGE SCALE GENOMIC DNA]</scope>
    <source>
        <strain>JL03</strain>
    </source>
</reference>
<sequence length="89" mass="10180">MSLSVEAKAKIVAEFGRDAKDTGSSEVQIALLTAQINHLQAHFAEHKKDHHGRRGLLRMVSRRRKLLDYLKRTDLAKYSETIARLGLRR</sequence>